<comment type="function">
    <text evidence="1">One of the primary rRNA binding proteins, it binds directly near the 3'-end of the 23S rRNA, where it nucleates assembly of the 50S subunit.</text>
</comment>
<comment type="subunit">
    <text evidence="1">Part of the 50S ribosomal subunit. Forms a cluster with proteins L14 and L19.</text>
</comment>
<comment type="similarity">
    <text evidence="1">Belongs to the universal ribosomal protein uL3 family.</text>
</comment>
<feature type="chain" id="PRO_0000077137" description="Large ribosomal subunit protein uL3">
    <location>
        <begin position="1"/>
        <end position="217"/>
    </location>
</feature>
<feature type="region of interest" description="Disordered" evidence="2">
    <location>
        <begin position="129"/>
        <end position="161"/>
    </location>
</feature>
<feature type="compositionally biased region" description="Low complexity" evidence="2">
    <location>
        <begin position="142"/>
        <end position="153"/>
    </location>
</feature>
<name>RL3_PROMP</name>
<dbReference type="EMBL" id="BX548174">
    <property type="protein sequence ID" value="CAE20017.1"/>
    <property type="molecule type" value="Genomic_DNA"/>
</dbReference>
<dbReference type="RefSeq" id="WP_011133186.1">
    <property type="nucleotide sequence ID" value="NC_005072.1"/>
</dbReference>
<dbReference type="SMR" id="Q7UZU7"/>
<dbReference type="STRING" id="59919.PMM1558"/>
<dbReference type="KEGG" id="pmm:PMM1558"/>
<dbReference type="eggNOG" id="COG0087">
    <property type="taxonomic scope" value="Bacteria"/>
</dbReference>
<dbReference type="HOGENOM" id="CLU_044142_4_1_3"/>
<dbReference type="OrthoDB" id="9806135at2"/>
<dbReference type="Proteomes" id="UP000001026">
    <property type="component" value="Chromosome"/>
</dbReference>
<dbReference type="GO" id="GO:0022625">
    <property type="term" value="C:cytosolic large ribosomal subunit"/>
    <property type="evidence" value="ECO:0007669"/>
    <property type="project" value="TreeGrafter"/>
</dbReference>
<dbReference type="GO" id="GO:0019843">
    <property type="term" value="F:rRNA binding"/>
    <property type="evidence" value="ECO:0007669"/>
    <property type="project" value="UniProtKB-UniRule"/>
</dbReference>
<dbReference type="GO" id="GO:0003735">
    <property type="term" value="F:structural constituent of ribosome"/>
    <property type="evidence" value="ECO:0007669"/>
    <property type="project" value="InterPro"/>
</dbReference>
<dbReference type="GO" id="GO:0006412">
    <property type="term" value="P:translation"/>
    <property type="evidence" value="ECO:0007669"/>
    <property type="project" value="UniProtKB-UniRule"/>
</dbReference>
<dbReference type="FunFam" id="3.30.160.810:FF:000001">
    <property type="entry name" value="50S ribosomal protein L3"/>
    <property type="match status" value="1"/>
</dbReference>
<dbReference type="FunFam" id="2.40.30.10:FF:000065">
    <property type="entry name" value="50S ribosomal protein L3, chloroplastic"/>
    <property type="match status" value="1"/>
</dbReference>
<dbReference type="Gene3D" id="3.30.160.810">
    <property type="match status" value="1"/>
</dbReference>
<dbReference type="Gene3D" id="2.40.30.10">
    <property type="entry name" value="Translation factors"/>
    <property type="match status" value="1"/>
</dbReference>
<dbReference type="HAMAP" id="MF_01325_B">
    <property type="entry name" value="Ribosomal_uL3_B"/>
    <property type="match status" value="1"/>
</dbReference>
<dbReference type="InterPro" id="IPR000597">
    <property type="entry name" value="Ribosomal_uL3"/>
</dbReference>
<dbReference type="InterPro" id="IPR019927">
    <property type="entry name" value="Ribosomal_uL3_bac/org-type"/>
</dbReference>
<dbReference type="InterPro" id="IPR019926">
    <property type="entry name" value="Ribosomal_uL3_CS"/>
</dbReference>
<dbReference type="InterPro" id="IPR009000">
    <property type="entry name" value="Transl_B-barrel_sf"/>
</dbReference>
<dbReference type="NCBIfam" id="TIGR03625">
    <property type="entry name" value="L3_bact"/>
    <property type="match status" value="1"/>
</dbReference>
<dbReference type="PANTHER" id="PTHR11229">
    <property type="entry name" value="50S RIBOSOMAL PROTEIN L3"/>
    <property type="match status" value="1"/>
</dbReference>
<dbReference type="PANTHER" id="PTHR11229:SF16">
    <property type="entry name" value="LARGE RIBOSOMAL SUBUNIT PROTEIN UL3C"/>
    <property type="match status" value="1"/>
</dbReference>
<dbReference type="Pfam" id="PF00297">
    <property type="entry name" value="Ribosomal_L3"/>
    <property type="match status" value="1"/>
</dbReference>
<dbReference type="SUPFAM" id="SSF50447">
    <property type="entry name" value="Translation proteins"/>
    <property type="match status" value="1"/>
</dbReference>
<dbReference type="PROSITE" id="PS00474">
    <property type="entry name" value="RIBOSOMAL_L3"/>
    <property type="match status" value="1"/>
</dbReference>
<keyword id="KW-0687">Ribonucleoprotein</keyword>
<keyword id="KW-0689">Ribosomal protein</keyword>
<keyword id="KW-0694">RNA-binding</keyword>
<keyword id="KW-0699">rRNA-binding</keyword>
<gene>
    <name evidence="1" type="primary">rplC</name>
    <name evidence="1" type="synonym">rpl3</name>
    <name type="ordered locus">PMM1558</name>
</gene>
<sequence>MSIGILGKKLGMSQLFDKDGNAVPVTLIEAGPCRVTQLKTQPLDGYTAIQIGYGVSKDKHLSKPEKGHLLKSGEILLKHLKEYRVEENSSYEIGKEITVTNFEVGQKVDISGKSMGRGFSGYQKRHGFSRGPMSHGSKNHRAPGSTGAGTTPGRIYPGKRMAGRYGGKKITTKGLLVVKIDDQKNLLVVKGSVPGKPGSIVNIKPNNVVGNKGGAKS</sequence>
<organism>
    <name type="scientific">Prochlorococcus marinus subsp. pastoris (strain CCMP1986 / NIES-2087 / MED4)</name>
    <dbReference type="NCBI Taxonomy" id="59919"/>
    <lineage>
        <taxon>Bacteria</taxon>
        <taxon>Bacillati</taxon>
        <taxon>Cyanobacteriota</taxon>
        <taxon>Cyanophyceae</taxon>
        <taxon>Synechococcales</taxon>
        <taxon>Prochlorococcaceae</taxon>
        <taxon>Prochlorococcus</taxon>
    </lineage>
</organism>
<reference key="1">
    <citation type="journal article" date="2003" name="Nature">
        <title>Genome divergence in two Prochlorococcus ecotypes reflects oceanic niche differentiation.</title>
        <authorList>
            <person name="Rocap G."/>
            <person name="Larimer F.W."/>
            <person name="Lamerdin J.E."/>
            <person name="Malfatti S."/>
            <person name="Chain P."/>
            <person name="Ahlgren N.A."/>
            <person name="Arellano A."/>
            <person name="Coleman M."/>
            <person name="Hauser L."/>
            <person name="Hess W.R."/>
            <person name="Johnson Z.I."/>
            <person name="Land M.L."/>
            <person name="Lindell D."/>
            <person name="Post A.F."/>
            <person name="Regala W."/>
            <person name="Shah M."/>
            <person name="Shaw S.L."/>
            <person name="Steglich C."/>
            <person name="Sullivan M.B."/>
            <person name="Ting C.S."/>
            <person name="Tolonen A."/>
            <person name="Webb E.A."/>
            <person name="Zinser E.R."/>
            <person name="Chisholm S.W."/>
        </authorList>
    </citation>
    <scope>NUCLEOTIDE SEQUENCE [LARGE SCALE GENOMIC DNA]</scope>
    <source>
        <strain>CCMP1986 / NIES-2087 / MED4</strain>
    </source>
</reference>
<evidence type="ECO:0000255" key="1">
    <source>
        <dbReference type="HAMAP-Rule" id="MF_01325"/>
    </source>
</evidence>
<evidence type="ECO:0000256" key="2">
    <source>
        <dbReference type="SAM" id="MobiDB-lite"/>
    </source>
</evidence>
<evidence type="ECO:0000305" key="3"/>
<proteinExistence type="inferred from homology"/>
<accession>Q7UZU7</accession>
<protein>
    <recommendedName>
        <fullName evidence="1">Large ribosomal subunit protein uL3</fullName>
    </recommendedName>
    <alternativeName>
        <fullName evidence="3">50S ribosomal protein L3</fullName>
    </alternativeName>
</protein>